<protein>
    <recommendedName>
        <fullName evidence="1">Proline--tRNA ligase</fullName>
        <ecNumber evidence="1">6.1.1.15</ecNumber>
    </recommendedName>
    <alternativeName>
        <fullName evidence="1">Prolyl-tRNA synthetase</fullName>
        <shortName evidence="1">ProRS</shortName>
    </alternativeName>
</protein>
<organism>
    <name type="scientific">Chlamydia trachomatis serovar D (strain ATCC VR-885 / DSM 19411 / UW-3/Cx)</name>
    <dbReference type="NCBI Taxonomy" id="272561"/>
    <lineage>
        <taxon>Bacteria</taxon>
        <taxon>Pseudomonadati</taxon>
        <taxon>Chlamydiota</taxon>
        <taxon>Chlamydiia</taxon>
        <taxon>Chlamydiales</taxon>
        <taxon>Chlamydiaceae</taxon>
        <taxon>Chlamydia/Chlamydophila group</taxon>
        <taxon>Chlamydia</taxon>
    </lineage>
</organism>
<evidence type="ECO:0000255" key="1">
    <source>
        <dbReference type="HAMAP-Rule" id="MF_01569"/>
    </source>
</evidence>
<name>SYP_CHLTR</name>
<accession>P36431</accession>
<accession>O84398</accession>
<reference key="1">
    <citation type="journal article" date="1994" name="Gene">
        <title>Another putative heat-shock gene and aminoacyl-tRNA synthetase gene are located upstream from the grpE-like and dnaK-like genes in Chlamydia trachomatis.</title>
        <authorList>
            <person name="Schmiel D.H."/>
            <person name="Wyrick P.B."/>
        </authorList>
    </citation>
    <scope>NUCLEOTIDE SEQUENCE [GENOMIC DNA]</scope>
    <source>
        <strain>E/UW-5/Cx</strain>
    </source>
</reference>
<reference key="2">
    <citation type="journal article" date="1998" name="Science">
        <title>Genome sequence of an obligate intracellular pathogen of humans: Chlamydia trachomatis.</title>
        <authorList>
            <person name="Stephens R.S."/>
            <person name="Kalman S."/>
            <person name="Lammel C.J."/>
            <person name="Fan J."/>
            <person name="Marathe R."/>
            <person name="Aravind L."/>
            <person name="Mitchell W.P."/>
            <person name="Olinger L."/>
            <person name="Tatusov R.L."/>
            <person name="Zhao Q."/>
            <person name="Koonin E.V."/>
            <person name="Davis R.W."/>
        </authorList>
    </citation>
    <scope>NUCLEOTIDE SEQUENCE [LARGE SCALE GENOMIC DNA]</scope>
    <source>
        <strain>ATCC VR-885 / DSM 19411 / UW-3/Cx</strain>
    </source>
</reference>
<keyword id="KW-0030">Aminoacyl-tRNA synthetase</keyword>
<keyword id="KW-0067">ATP-binding</keyword>
<keyword id="KW-0963">Cytoplasm</keyword>
<keyword id="KW-0436">Ligase</keyword>
<keyword id="KW-0547">Nucleotide-binding</keyword>
<keyword id="KW-0648">Protein biosynthesis</keyword>
<keyword id="KW-1185">Reference proteome</keyword>
<proteinExistence type="inferred from homology"/>
<comment type="function">
    <text evidence="1">Catalyzes the attachment of proline to tRNA(Pro) in a two-step reaction: proline is first activated by ATP to form Pro-AMP and then transferred to the acceptor end of tRNA(Pro). As ProRS can inadvertently accommodate and process non-cognate amino acids such as alanine and cysteine, to avoid such errors it has two additional distinct editing activities against alanine. One activity is designated as 'pretransfer' editing and involves the tRNA(Pro)-independent hydrolysis of activated Ala-AMP. The other activity is designated 'posttransfer' editing and involves deacylation of mischarged Ala-tRNA(Pro). The misacylated Cys-tRNA(Pro) is not edited by ProRS.</text>
</comment>
<comment type="catalytic activity">
    <reaction evidence="1">
        <text>tRNA(Pro) + L-proline + ATP = L-prolyl-tRNA(Pro) + AMP + diphosphate</text>
        <dbReference type="Rhea" id="RHEA:14305"/>
        <dbReference type="Rhea" id="RHEA-COMP:9700"/>
        <dbReference type="Rhea" id="RHEA-COMP:9702"/>
        <dbReference type="ChEBI" id="CHEBI:30616"/>
        <dbReference type="ChEBI" id="CHEBI:33019"/>
        <dbReference type="ChEBI" id="CHEBI:60039"/>
        <dbReference type="ChEBI" id="CHEBI:78442"/>
        <dbReference type="ChEBI" id="CHEBI:78532"/>
        <dbReference type="ChEBI" id="CHEBI:456215"/>
        <dbReference type="EC" id="6.1.1.15"/>
    </reaction>
</comment>
<comment type="subunit">
    <text evidence="1">Homodimer.</text>
</comment>
<comment type="subcellular location">
    <subcellularLocation>
        <location evidence="1">Cytoplasm</location>
    </subcellularLocation>
</comment>
<comment type="domain">
    <text evidence="1">Consists of three domains: the N-terminal catalytic domain, the editing domain and the C-terminal anticodon-binding domain.</text>
</comment>
<comment type="similarity">
    <text evidence="1">Belongs to the class-II aminoacyl-tRNA synthetase family. ProS type 1 subfamily.</text>
</comment>
<sequence length="581" mass="65653">MRMSLLFYRTSKNANKEASVLSYELLQKAGYLFKTSKGIYSYTPLFQRVILKMTEIIREELNAIGGQEVCLPLLQPAELWEKTGRWKAFLSEKLLYVLKDRENKAMCLAPTHEEVVSEFVAQWLTGREQLPIHLYQIGTKFRDEIRPRFGLMRAKEFLMEDSYTFSDSPEQMEEQYAKLRLAYQRIFDRLNLKYVIVAADGGKIGKGKSEEFHVLCSLGEDTICVSGSYGANVEAAQAIPPSYVYDSNLLPVEEVATPNIRTIEDLEVFFNTPKHKILKTLVVKTCQKDSEKFFAICIRGDRQINLTKVASFLQVDDCELASEEEILKHLHVEKGFIGPLYCPIPCYADETTRPMTNFICANNQKDVHCKHVNWGRDIPLPAFGDFLLAEAGDLCPQNGGAPYEIFQGVEVAHIFNLGTRYTESFSVGFQDKNGDKQLCWMGTYGIGVGRTLAACIEQLADNKGLVWPLAVAPFSITILYNGGDTEGEATALQLYQSLNTEGFEPLLDDRNERLGFKLKDSDLLGIPYKLIIGKSFQSTGLLEIESRSGEKCNVSPENLLDWCSKNLPCHTRKIPPLREQN</sequence>
<dbReference type="EC" id="6.1.1.15" evidence="1"/>
<dbReference type="EMBL" id="L25105">
    <property type="protein sequence ID" value="AAA23161.1"/>
    <property type="molecule type" value="Genomic_DNA"/>
</dbReference>
<dbReference type="EMBL" id="AE001273">
    <property type="protein sequence ID" value="AAC67990.1"/>
    <property type="molecule type" value="Genomic_DNA"/>
</dbReference>
<dbReference type="PIR" id="G71520">
    <property type="entry name" value="G71520"/>
</dbReference>
<dbReference type="RefSeq" id="NP_219903.1">
    <property type="nucleotide sequence ID" value="NC_000117.1"/>
</dbReference>
<dbReference type="RefSeq" id="WP_010725180.1">
    <property type="nucleotide sequence ID" value="NC_000117.1"/>
</dbReference>
<dbReference type="SMR" id="P36431"/>
<dbReference type="FunCoup" id="P36431">
    <property type="interactions" value="206"/>
</dbReference>
<dbReference type="STRING" id="272561.CT_393"/>
<dbReference type="EnsemblBacteria" id="AAC67990">
    <property type="protein sequence ID" value="AAC67990"/>
    <property type="gene ID" value="CT_393"/>
</dbReference>
<dbReference type="GeneID" id="884722"/>
<dbReference type="KEGG" id="ctr:CT_393"/>
<dbReference type="PATRIC" id="fig|272561.5.peg.423"/>
<dbReference type="HOGENOM" id="CLU_016739_0_0_0"/>
<dbReference type="InParanoid" id="P36431"/>
<dbReference type="OrthoDB" id="9809052at2"/>
<dbReference type="Proteomes" id="UP000000431">
    <property type="component" value="Chromosome"/>
</dbReference>
<dbReference type="GO" id="GO:0005829">
    <property type="term" value="C:cytosol"/>
    <property type="evidence" value="ECO:0000318"/>
    <property type="project" value="GO_Central"/>
</dbReference>
<dbReference type="GO" id="GO:0002161">
    <property type="term" value="F:aminoacyl-tRNA deacylase activity"/>
    <property type="evidence" value="ECO:0007669"/>
    <property type="project" value="InterPro"/>
</dbReference>
<dbReference type="GO" id="GO:0005524">
    <property type="term" value="F:ATP binding"/>
    <property type="evidence" value="ECO:0007669"/>
    <property type="project" value="UniProtKB-UniRule"/>
</dbReference>
<dbReference type="GO" id="GO:0004827">
    <property type="term" value="F:proline-tRNA ligase activity"/>
    <property type="evidence" value="ECO:0000318"/>
    <property type="project" value="GO_Central"/>
</dbReference>
<dbReference type="GO" id="GO:0006433">
    <property type="term" value="P:prolyl-tRNA aminoacylation"/>
    <property type="evidence" value="ECO:0000318"/>
    <property type="project" value="GO_Central"/>
</dbReference>
<dbReference type="CDD" id="cd04334">
    <property type="entry name" value="ProRS-INS"/>
    <property type="match status" value="1"/>
</dbReference>
<dbReference type="CDD" id="cd00861">
    <property type="entry name" value="ProRS_anticodon_short"/>
    <property type="match status" value="1"/>
</dbReference>
<dbReference type="CDD" id="cd00779">
    <property type="entry name" value="ProRS_core_prok"/>
    <property type="match status" value="1"/>
</dbReference>
<dbReference type="FunFam" id="3.40.50.800:FF:000046">
    <property type="entry name" value="Proline--tRNA ligase"/>
    <property type="match status" value="1"/>
</dbReference>
<dbReference type="FunFam" id="3.90.960.10:FF:000011">
    <property type="entry name" value="Proline--tRNA ligase"/>
    <property type="match status" value="1"/>
</dbReference>
<dbReference type="Gene3D" id="3.40.50.800">
    <property type="entry name" value="Anticodon-binding domain"/>
    <property type="match status" value="1"/>
</dbReference>
<dbReference type="Gene3D" id="3.30.930.10">
    <property type="entry name" value="Bira Bifunctional Protein, Domain 2"/>
    <property type="match status" value="1"/>
</dbReference>
<dbReference type="Gene3D" id="3.90.960.10">
    <property type="entry name" value="YbaK/aminoacyl-tRNA synthetase-associated domain"/>
    <property type="match status" value="1"/>
</dbReference>
<dbReference type="HAMAP" id="MF_01569">
    <property type="entry name" value="Pro_tRNA_synth_type1"/>
    <property type="match status" value="1"/>
</dbReference>
<dbReference type="InterPro" id="IPR002314">
    <property type="entry name" value="aa-tRNA-synt_IIb"/>
</dbReference>
<dbReference type="InterPro" id="IPR006195">
    <property type="entry name" value="aa-tRNA-synth_II"/>
</dbReference>
<dbReference type="InterPro" id="IPR045864">
    <property type="entry name" value="aa-tRNA-synth_II/BPL/LPL"/>
</dbReference>
<dbReference type="InterPro" id="IPR004154">
    <property type="entry name" value="Anticodon-bd"/>
</dbReference>
<dbReference type="InterPro" id="IPR036621">
    <property type="entry name" value="Anticodon-bd_dom_sf"/>
</dbReference>
<dbReference type="InterPro" id="IPR002316">
    <property type="entry name" value="Pro-tRNA-ligase_IIa"/>
</dbReference>
<dbReference type="InterPro" id="IPR004500">
    <property type="entry name" value="Pro-tRNA-synth_IIa_bac-type"/>
</dbReference>
<dbReference type="InterPro" id="IPR023717">
    <property type="entry name" value="Pro-tRNA-Synthase_IIa_type1"/>
</dbReference>
<dbReference type="InterPro" id="IPR050062">
    <property type="entry name" value="Pro-tRNA_synthetase"/>
</dbReference>
<dbReference type="InterPro" id="IPR044140">
    <property type="entry name" value="ProRS_anticodon_short"/>
</dbReference>
<dbReference type="InterPro" id="IPR033730">
    <property type="entry name" value="ProRS_core_prok"/>
</dbReference>
<dbReference type="InterPro" id="IPR036754">
    <property type="entry name" value="YbaK/aa-tRNA-synt-asso_dom_sf"/>
</dbReference>
<dbReference type="InterPro" id="IPR007214">
    <property type="entry name" value="YbaK/aa-tRNA-synth-assoc-dom"/>
</dbReference>
<dbReference type="NCBIfam" id="NF006625">
    <property type="entry name" value="PRK09194.1"/>
    <property type="match status" value="1"/>
</dbReference>
<dbReference type="NCBIfam" id="TIGR00409">
    <property type="entry name" value="proS_fam_II"/>
    <property type="match status" value="1"/>
</dbReference>
<dbReference type="PANTHER" id="PTHR42753">
    <property type="entry name" value="MITOCHONDRIAL RIBOSOME PROTEIN L39/PROLYL-TRNA LIGASE FAMILY MEMBER"/>
    <property type="match status" value="1"/>
</dbReference>
<dbReference type="PANTHER" id="PTHR42753:SF2">
    <property type="entry name" value="PROLINE--TRNA LIGASE"/>
    <property type="match status" value="1"/>
</dbReference>
<dbReference type="Pfam" id="PF03129">
    <property type="entry name" value="HGTP_anticodon"/>
    <property type="match status" value="1"/>
</dbReference>
<dbReference type="Pfam" id="PF00587">
    <property type="entry name" value="tRNA-synt_2b"/>
    <property type="match status" value="1"/>
</dbReference>
<dbReference type="Pfam" id="PF04073">
    <property type="entry name" value="tRNA_edit"/>
    <property type="match status" value="1"/>
</dbReference>
<dbReference type="PRINTS" id="PR01046">
    <property type="entry name" value="TRNASYNTHPRO"/>
</dbReference>
<dbReference type="SUPFAM" id="SSF52954">
    <property type="entry name" value="Class II aaRS ABD-related"/>
    <property type="match status" value="1"/>
</dbReference>
<dbReference type="SUPFAM" id="SSF55681">
    <property type="entry name" value="Class II aaRS and biotin synthetases"/>
    <property type="match status" value="1"/>
</dbReference>
<dbReference type="SUPFAM" id="SSF55826">
    <property type="entry name" value="YbaK/ProRS associated domain"/>
    <property type="match status" value="1"/>
</dbReference>
<dbReference type="PROSITE" id="PS50862">
    <property type="entry name" value="AA_TRNA_LIGASE_II"/>
    <property type="match status" value="1"/>
</dbReference>
<feature type="chain" id="PRO_0000139327" description="Proline--tRNA ligase">
    <location>
        <begin position="1"/>
        <end position="581"/>
    </location>
</feature>
<feature type="sequence variant" description="In strain: E/UW-5/Cx.">
    <original>M</original>
    <variation>T</variation>
    <location>
        <position position="3"/>
    </location>
</feature>
<feature type="sequence variant" description="In strain: E/UW-5/Cx.">
    <original>A</original>
    <variation>V</variation>
    <location>
        <position position="14"/>
    </location>
</feature>
<feature type="sequence variant" description="In strain: E/UW-5/Cx.">
    <original>K</original>
    <variation>E</variation>
    <location>
        <position position="104"/>
    </location>
</feature>
<feature type="sequence variant" description="In strain: E/UW-5/Cx.">
    <original>I</original>
    <variation>V</variation>
    <location>
        <position position="263"/>
    </location>
</feature>
<feature type="sequence variant" description="In strain: E/UW-5/Cx.">
    <original>C</original>
    <variation>R</variation>
    <location>
        <position position="286"/>
    </location>
</feature>
<feature type="sequence variant" description="In strain: E/UW-5/Cx.">
    <original>P</original>
    <variation>L</variation>
    <location>
        <position position="354"/>
    </location>
</feature>
<gene>
    <name evidence="1" type="primary">proS</name>
    <name type="ordered locus">CT_393</name>
</gene>